<accession>P0AEH6</accession>
<accession>P52084</accession>
<accession>Q47010</accession>
<reference key="1">
    <citation type="journal article" date="2002" name="Proc. Natl. Acad. Sci. U.S.A.">
        <title>Extensive mosaic structure revealed by the complete genome sequence of uropathogenic Escherichia coli.</title>
        <authorList>
            <person name="Welch R.A."/>
            <person name="Burland V."/>
            <person name="Plunkett G. III"/>
            <person name="Redford P."/>
            <person name="Roesch P."/>
            <person name="Rasko D."/>
            <person name="Buckles E.L."/>
            <person name="Liou S.-R."/>
            <person name="Boutin A."/>
            <person name="Hackett J."/>
            <person name="Stroud D."/>
            <person name="Mayhew G.F."/>
            <person name="Rose D.J."/>
            <person name="Zhou S."/>
            <person name="Schwartz D.C."/>
            <person name="Perna N.T."/>
            <person name="Mobley H.L.T."/>
            <person name="Donnenberg M.S."/>
            <person name="Blattner F.R."/>
        </authorList>
    </citation>
    <scope>NUCLEOTIDE SEQUENCE [LARGE SCALE GENOMIC DNA]</scope>
    <source>
        <strain>CFT073 / ATCC 700928 / UPEC</strain>
    </source>
</reference>
<protein>
    <recommendedName>
        <fullName>Protein ElaB</fullName>
    </recommendedName>
</protein>
<organism>
    <name type="scientific">Escherichia coli O6:H1 (strain CFT073 / ATCC 700928 / UPEC)</name>
    <dbReference type="NCBI Taxonomy" id="199310"/>
    <lineage>
        <taxon>Bacteria</taxon>
        <taxon>Pseudomonadati</taxon>
        <taxon>Pseudomonadota</taxon>
        <taxon>Gammaproteobacteria</taxon>
        <taxon>Enterobacterales</taxon>
        <taxon>Enterobacteriaceae</taxon>
        <taxon>Escherichia</taxon>
    </lineage>
</organism>
<dbReference type="EMBL" id="AE014075">
    <property type="protein sequence ID" value="AAN81264.1"/>
    <property type="molecule type" value="Genomic_DNA"/>
</dbReference>
<dbReference type="RefSeq" id="WP_000070621.1">
    <property type="nucleotide sequence ID" value="NZ_CP051263.1"/>
</dbReference>
<dbReference type="SMR" id="P0AEH6"/>
<dbReference type="STRING" id="199310.c2810"/>
<dbReference type="GeneID" id="75205683"/>
<dbReference type="KEGG" id="ecc:c2810"/>
<dbReference type="eggNOG" id="COG4575">
    <property type="taxonomic scope" value="Bacteria"/>
</dbReference>
<dbReference type="HOGENOM" id="CLU_132623_0_2_6"/>
<dbReference type="BioCyc" id="ECOL199310:C2810-MONOMER"/>
<dbReference type="Proteomes" id="UP000001410">
    <property type="component" value="Chromosome"/>
</dbReference>
<dbReference type="GO" id="GO:0005886">
    <property type="term" value="C:plasma membrane"/>
    <property type="evidence" value="ECO:0007669"/>
    <property type="project" value="UniProtKB-SubCell"/>
</dbReference>
<dbReference type="GO" id="GO:0043022">
    <property type="term" value="F:ribosome binding"/>
    <property type="evidence" value="ECO:0007669"/>
    <property type="project" value="InterPro"/>
</dbReference>
<dbReference type="InterPro" id="IPR043605">
    <property type="entry name" value="DUF883_C"/>
</dbReference>
<dbReference type="InterPro" id="IPR043604">
    <property type="entry name" value="DUF883_N"/>
</dbReference>
<dbReference type="InterPro" id="IPR010279">
    <property type="entry name" value="YqjD/ElaB"/>
</dbReference>
<dbReference type="NCBIfam" id="NF007709">
    <property type="entry name" value="PRK10404.1"/>
    <property type="match status" value="1"/>
</dbReference>
<dbReference type="PANTHER" id="PTHR35893">
    <property type="entry name" value="INNER MEMBRANE PROTEIN-RELATED"/>
    <property type="match status" value="1"/>
</dbReference>
<dbReference type="PANTHER" id="PTHR35893:SF1">
    <property type="entry name" value="PROTEIN ELAB"/>
    <property type="match status" value="1"/>
</dbReference>
<dbReference type="Pfam" id="PF05957">
    <property type="entry name" value="DUF883"/>
    <property type="match status" value="1"/>
</dbReference>
<dbReference type="Pfam" id="PF19029">
    <property type="entry name" value="DUF883_C"/>
    <property type="match status" value="1"/>
</dbReference>
<gene>
    <name type="primary">elaB</name>
    <name type="ordered locus">c2810</name>
</gene>
<comment type="subunit">
    <text evidence="1">May bind to ribosomes.</text>
</comment>
<comment type="subcellular location">
    <subcellularLocation>
        <location evidence="3">Cell inner membrane</location>
        <topology evidence="3">Single-pass membrane protein</topology>
    </subcellularLocation>
</comment>
<comment type="similarity">
    <text evidence="3">Belongs to the ElaB/YgaM/YqjD family.</text>
</comment>
<evidence type="ECO:0000250" key="1"/>
<evidence type="ECO:0000255" key="2"/>
<evidence type="ECO:0000305" key="3"/>
<feature type="chain" id="PRO_0000086949" description="Protein ElaB">
    <location>
        <begin position="1"/>
        <end position="101"/>
    </location>
</feature>
<feature type="transmembrane region" description="Helical" evidence="2">
    <location>
        <begin position="80"/>
        <end position="99"/>
    </location>
</feature>
<feature type="modified residue" description="N6-acetyllysine" evidence="1">
    <location>
        <position position="35"/>
    </location>
</feature>
<keyword id="KW-0007">Acetylation</keyword>
<keyword id="KW-0997">Cell inner membrane</keyword>
<keyword id="KW-1003">Cell membrane</keyword>
<keyword id="KW-0472">Membrane</keyword>
<keyword id="KW-1185">Reference proteome</keyword>
<keyword id="KW-0812">Transmembrane</keyword>
<keyword id="KW-1133">Transmembrane helix</keyword>
<sequence>MSNQFGDTRIDDDLTLLSETLEEVLRSSGDPADQKYVELKARAEKALDDVKKRVSQASDSYYYRAKQAVYRADDYVHEKPWQGIGVGAAVGLVLGLLLARR</sequence>
<proteinExistence type="inferred from homology"/>
<name>ELAB_ECOL6</name>